<dbReference type="EMBL" id="BC149110">
    <property type="protein sequence ID" value="AAI49111.1"/>
    <property type="molecule type" value="mRNA"/>
</dbReference>
<dbReference type="RefSeq" id="NP_001094731.1">
    <property type="nucleotide sequence ID" value="NM_001101261.1"/>
</dbReference>
<dbReference type="RefSeq" id="XP_005204245.1">
    <property type="nucleotide sequence ID" value="XM_005204188.3"/>
</dbReference>
<dbReference type="SMR" id="A6QP24"/>
<dbReference type="FunCoup" id="A6QP24">
    <property type="interactions" value="192"/>
</dbReference>
<dbReference type="STRING" id="9913.ENSBTAP00000030567"/>
<dbReference type="PaxDb" id="9913-ENSBTAP00000030567"/>
<dbReference type="Ensembl" id="ENSBTAT00000030590.6">
    <property type="protein sequence ID" value="ENSBTAP00000030567.4"/>
    <property type="gene ID" value="ENSBTAG00000022580.6"/>
</dbReference>
<dbReference type="GeneID" id="616754"/>
<dbReference type="KEGG" id="bta:616754"/>
<dbReference type="CTD" id="55924"/>
<dbReference type="VEuPathDB" id="HostDB:ENSBTAG00000022580"/>
<dbReference type="VGNC" id="VGNC:50127">
    <property type="gene designation" value="INKA2"/>
</dbReference>
<dbReference type="eggNOG" id="ENOG502RZNT">
    <property type="taxonomic scope" value="Eukaryota"/>
</dbReference>
<dbReference type="GeneTree" id="ENSGT00530000063849"/>
<dbReference type="HOGENOM" id="CLU_082435_0_0_1"/>
<dbReference type="InParanoid" id="A6QP24"/>
<dbReference type="OMA" id="QPEPPRW"/>
<dbReference type="OrthoDB" id="9931119at2759"/>
<dbReference type="TreeFam" id="TF332839"/>
<dbReference type="Proteomes" id="UP000009136">
    <property type="component" value="Chromosome 3"/>
</dbReference>
<dbReference type="Bgee" id="ENSBTAG00000022580">
    <property type="expression patterns" value="Expressed in Ammon's horn and 100 other cell types or tissues"/>
</dbReference>
<dbReference type="GO" id="GO:0005730">
    <property type="term" value="C:nucleolus"/>
    <property type="evidence" value="ECO:0007669"/>
    <property type="project" value="Ensembl"/>
</dbReference>
<dbReference type="GO" id="GO:0005654">
    <property type="term" value="C:nucleoplasm"/>
    <property type="evidence" value="ECO:0007669"/>
    <property type="project" value="Ensembl"/>
</dbReference>
<dbReference type="GO" id="GO:0005634">
    <property type="term" value="C:nucleus"/>
    <property type="evidence" value="ECO:0000250"/>
    <property type="project" value="UniProtKB"/>
</dbReference>
<dbReference type="GO" id="GO:0019901">
    <property type="term" value="F:protein kinase binding"/>
    <property type="evidence" value="ECO:0000318"/>
    <property type="project" value="GO_Central"/>
</dbReference>
<dbReference type="GO" id="GO:0030291">
    <property type="term" value="F:protein serine/threonine kinase inhibitor activity"/>
    <property type="evidence" value="ECO:0000250"/>
    <property type="project" value="UniProtKB"/>
</dbReference>
<dbReference type="FunFam" id="3.30.200.20:FF:000319">
    <property type="entry name" value="Inka box actin regulator 2"/>
    <property type="match status" value="1"/>
</dbReference>
<dbReference type="Gene3D" id="3.30.200.20">
    <property type="entry name" value="Phosphorylase Kinase, domain 1"/>
    <property type="match status" value="1"/>
</dbReference>
<dbReference type="InterPro" id="IPR029267">
    <property type="entry name" value="FAM212"/>
</dbReference>
<dbReference type="InterPro" id="IPR039201">
    <property type="entry name" value="Inka"/>
</dbReference>
<dbReference type="PANTHER" id="PTHR28615">
    <property type="entry name" value="PAK4-INHIBITOR INKA1-RELATED"/>
    <property type="match status" value="1"/>
</dbReference>
<dbReference type="PANTHER" id="PTHR28615:SF2">
    <property type="entry name" value="PAK4-INHIBITOR INKA2"/>
    <property type="match status" value="1"/>
</dbReference>
<dbReference type="Pfam" id="PF15342">
    <property type="entry name" value="FAM212"/>
    <property type="match status" value="1"/>
</dbReference>
<evidence type="ECO:0000250" key="1">
    <source>
        <dbReference type="UniProtKB" id="Q96EL1"/>
    </source>
</evidence>
<evidence type="ECO:0000250" key="2">
    <source>
        <dbReference type="UniProtKB" id="Q9NTI7"/>
    </source>
</evidence>
<evidence type="ECO:0000256" key="3">
    <source>
        <dbReference type="SAM" id="MobiDB-lite"/>
    </source>
</evidence>
<evidence type="ECO:0000305" key="4"/>
<protein>
    <recommendedName>
        <fullName evidence="4">PAK4-inhibitor INKA2</fullName>
    </recommendedName>
</protein>
<reference key="1">
    <citation type="submission" date="2007-07" db="EMBL/GenBank/DDBJ databases">
        <authorList>
            <consortium name="NIH - Mammalian Gene Collection (MGC) project"/>
        </authorList>
    </citation>
    <scope>NUCLEOTIDE SEQUENCE [LARGE SCALE MRNA]</scope>
    <source>
        <strain>Hereford</strain>
        <tissue>Basal ganglia</tissue>
    </source>
</reference>
<proteinExistence type="evidence at transcript level"/>
<gene>
    <name evidence="2" type="primary">INKA2</name>
    <name evidence="2" type="synonym">FAM212B</name>
</gene>
<feature type="chain" id="PRO_0000304993" description="PAK4-inhibitor INKA2">
    <location>
        <begin position="1"/>
        <end position="294"/>
    </location>
</feature>
<feature type="region of interest" description="Disordered" evidence="3">
    <location>
        <begin position="50"/>
        <end position="143"/>
    </location>
</feature>
<feature type="region of interest" description="Inka box" evidence="1">
    <location>
        <begin position="134"/>
        <end position="177"/>
    </location>
</feature>
<feature type="region of interest" description="Disordered" evidence="3">
    <location>
        <begin position="170"/>
        <end position="198"/>
    </location>
</feature>
<feature type="region of interest" description="Disordered" evidence="3">
    <location>
        <begin position="223"/>
        <end position="290"/>
    </location>
</feature>
<feature type="compositionally biased region" description="Polar residues" evidence="3">
    <location>
        <begin position="85"/>
        <end position="99"/>
    </location>
</feature>
<feature type="compositionally biased region" description="Basic and acidic residues" evidence="3">
    <location>
        <begin position="171"/>
        <end position="198"/>
    </location>
</feature>
<feature type="compositionally biased region" description="Basic residues" evidence="3">
    <location>
        <begin position="241"/>
        <end position="253"/>
    </location>
</feature>
<organism>
    <name type="scientific">Bos taurus</name>
    <name type="common">Bovine</name>
    <dbReference type="NCBI Taxonomy" id="9913"/>
    <lineage>
        <taxon>Eukaryota</taxon>
        <taxon>Metazoa</taxon>
        <taxon>Chordata</taxon>
        <taxon>Craniata</taxon>
        <taxon>Vertebrata</taxon>
        <taxon>Euteleostomi</taxon>
        <taxon>Mammalia</taxon>
        <taxon>Eutheria</taxon>
        <taxon>Laurasiatheria</taxon>
        <taxon>Artiodactyla</taxon>
        <taxon>Ruminantia</taxon>
        <taxon>Pecora</taxon>
        <taxon>Bovidae</taxon>
        <taxon>Bovinae</taxon>
        <taxon>Bos</taxon>
    </lineage>
</organism>
<accession>A6QP24</accession>
<comment type="function">
    <text evidence="1">Inhibitor of the serine/threonine-protein kinase PAK4. Acts by binding PAK4 in a substrate-like manner, inhibiting the protein kinase activity.</text>
</comment>
<comment type="subunit">
    <text evidence="2">Interacts with PAK4.</text>
</comment>
<comment type="subcellular location">
    <subcellularLocation>
        <location evidence="2">Nucleus</location>
    </subcellularLocation>
</comment>
<comment type="domain">
    <text evidence="1">The Inka box (also named iBox or inca box) binds and inhibits PAK4 by binding a substrate-like manner.</text>
</comment>
<comment type="similarity">
    <text evidence="4">Belongs to the INKA family.</text>
</comment>
<keyword id="KW-0539">Nucleus</keyword>
<keyword id="KW-1185">Reference proteome</keyword>
<name>INKA2_BOVIN</name>
<sequence>MDCYLRRLKQELMSMKEVGDGLQDQMNCMMGALQELKLLQVQTALEQLEISGGGPAPGSPESPWTQLEPPQWEGSRGPVRPGACSPSNQASLGSTSSGKFPSHRSVCGRELATPPRTPLPEPQPSAQQGPELAEPDDWTSTLMSRGRNRQPLVLGDNVFADLVGNWLDLPELEKGGEKGETGEAGEPKGGRGQPRELGRRFALTANIFRKFLRSVRPDRDRLLKEKPGWVTPTASEPRAGRSQKVKKRSHSKGSGHCPFPGASEPRRGENASTGCPKALESSPSGFDINTAVWV</sequence>